<sequence>MPSLRRLLPFLAAGSAALASQDTFQGKCTGFADKINLPDVRVNFVNYVPGGTNLSLPDNPTSCGTTSQVVSEDVCRIAMAVATSNSSEITLEAWLPQNYTGRFLSTGNGGLSGCIQYYDLAYTSGLGFATVGANSGHNGTSGEPFYHHPEVLEDFVHRSVHTGVVVGKQLTKLFYEEGFKKSYYLGCSTGGRQGFKSVQKYPNDFDGVVAGAPAFNMINLMSWSAHFYSITGPVGSDTYLSPDLWNITHKEILRQCDGIDGAEDGIIEDPSLCSPVLEAIICKPGQNTTECLTGKQAHTVREIFSPLYGVNGTLLYPRMQPGSEVMASSIMYNGQPFQYSADWYRYVVYENPNWDATKFSVRDAAVALKQNPFNLQTWDADISSFRKAGGKVLTYHGLMDQLISSENSKLYYARVAETMNVPPEELDEFYRFFQISGMAHCSGGDGAYGIGNQLVTYNDANPENNVLMAMVQWVEKGIAPETIRGAKFTNGTGSAVEYTRKHCRYPRRNVYKGPGNYTDENAWQCV</sequence>
<protein>
    <recommendedName>
        <fullName>Probable feruloyl esterase B-1</fullName>
        <ecNumber evidence="3">3.1.1.73</ecNumber>
    </recommendedName>
    <alternativeName>
        <fullName>Ferulic acid esterase B-1</fullName>
        <shortName>FAEB-1</shortName>
    </alternativeName>
</protein>
<feature type="signal peptide" evidence="4">
    <location>
        <begin position="1"/>
        <end position="19"/>
    </location>
</feature>
<feature type="chain" id="PRO_0000394922" description="Probable feruloyl esterase B-1">
    <location>
        <begin position="20"/>
        <end position="526"/>
    </location>
</feature>
<feature type="active site" description="Acyl-ester intermediate" evidence="2">
    <location>
        <position position="188"/>
    </location>
</feature>
<feature type="active site" description="Charge relay system" evidence="2">
    <location>
        <position position="400"/>
    </location>
</feature>
<feature type="active site" description="Charge relay system" evidence="2">
    <location>
        <position position="440"/>
    </location>
</feature>
<feature type="binding site" evidence="2">
    <location>
        <position position="257"/>
    </location>
    <ligand>
        <name>Ca(2+)</name>
        <dbReference type="ChEBI" id="CHEBI:29108"/>
    </ligand>
</feature>
<feature type="binding site" evidence="2">
    <location>
        <position position="260"/>
    </location>
    <ligand>
        <name>Ca(2+)</name>
        <dbReference type="ChEBI" id="CHEBI:29108"/>
    </ligand>
</feature>
<feature type="binding site" evidence="2">
    <location>
        <position position="262"/>
    </location>
    <ligand>
        <name>Ca(2+)</name>
        <dbReference type="ChEBI" id="CHEBI:29108"/>
    </ligand>
</feature>
<feature type="binding site" evidence="2">
    <location>
        <position position="264"/>
    </location>
    <ligand>
        <name>Ca(2+)</name>
        <dbReference type="ChEBI" id="CHEBI:29108"/>
    </ligand>
</feature>
<feature type="binding site" evidence="2">
    <location>
        <position position="266"/>
    </location>
    <ligand>
        <name>Ca(2+)</name>
        <dbReference type="ChEBI" id="CHEBI:29108"/>
    </ligand>
</feature>
<feature type="glycosylation site" description="N-linked (GlcNAc...) asparagine" evidence="4">
    <location>
        <position position="53"/>
    </location>
</feature>
<feature type="glycosylation site" description="N-linked (GlcNAc...) asparagine" evidence="4">
    <location>
        <position position="85"/>
    </location>
</feature>
<feature type="glycosylation site" description="N-linked (GlcNAc...) asparagine" evidence="4">
    <location>
        <position position="98"/>
    </location>
</feature>
<feature type="glycosylation site" description="N-linked (GlcNAc...) asparagine" evidence="4">
    <location>
        <position position="138"/>
    </location>
</feature>
<feature type="glycosylation site" description="N-linked (GlcNAc...) asparagine" evidence="4">
    <location>
        <position position="246"/>
    </location>
</feature>
<feature type="glycosylation site" description="N-linked (GlcNAc...) asparagine" evidence="4">
    <location>
        <position position="287"/>
    </location>
</feature>
<feature type="glycosylation site" description="N-linked (GlcNAc...) asparagine" evidence="4">
    <location>
        <position position="311"/>
    </location>
</feature>
<feature type="glycosylation site" description="N-linked (GlcNAc...) asparagine" evidence="4">
    <location>
        <position position="490"/>
    </location>
</feature>
<feature type="glycosylation site" description="N-linked (GlcNAc...) asparagine" evidence="4">
    <location>
        <position position="516"/>
    </location>
</feature>
<feature type="disulfide bond" evidence="2">
    <location>
        <begin position="28"/>
        <end position="75"/>
    </location>
</feature>
<feature type="disulfide bond" evidence="2">
    <location>
        <begin position="63"/>
        <end position="114"/>
    </location>
</feature>
<feature type="disulfide bond" evidence="2">
    <location>
        <begin position="187"/>
        <end position="441"/>
    </location>
</feature>
<feature type="disulfide bond" evidence="2">
    <location>
        <begin position="256"/>
        <end position="273"/>
    </location>
</feature>
<feature type="disulfide bond" evidence="2">
    <location>
        <begin position="282"/>
        <end position="291"/>
    </location>
</feature>
<feature type="disulfide bond" evidence="2">
    <location>
        <begin position="503"/>
        <end position="525"/>
    </location>
</feature>
<reference key="1">
    <citation type="journal article" date="2015" name="Genome Announc.">
        <title>Genome sequence of Aspergillus flavus NRRL 3357, a strain that causes aflatoxin contamination of food and feed.</title>
        <authorList>
            <person name="Nierman W.C."/>
            <person name="Yu J."/>
            <person name="Fedorova-Abrams N.D."/>
            <person name="Losada L."/>
            <person name="Cleveland T.E."/>
            <person name="Bhatnagar D."/>
            <person name="Bennett J.W."/>
            <person name="Dean R."/>
            <person name="Payne G.A."/>
        </authorList>
    </citation>
    <scope>NUCLEOTIDE SEQUENCE [LARGE SCALE GENOMIC DNA]</scope>
    <source>
        <strain>ATCC 200026 / FGSC A1120 / IAM 13836 / NRRL 3357 / JCM 12722 / SRRC 167</strain>
    </source>
</reference>
<proteinExistence type="inferred from homology"/>
<accession>B8NPA4</accession>
<evidence type="ECO:0000250" key="1"/>
<evidence type="ECO:0000250" key="2">
    <source>
        <dbReference type="UniProtKB" id="Q2UP89"/>
    </source>
</evidence>
<evidence type="ECO:0000250" key="3">
    <source>
        <dbReference type="UniProtKB" id="Q8WZI8"/>
    </source>
</evidence>
<evidence type="ECO:0000255" key="4"/>
<evidence type="ECO:0000305" key="5"/>
<comment type="function">
    <text evidence="3">Involved in degradation of plant cell walls. Hydrolyzes the feruloyl-arabinose ester bond in arabinoxylans as well as the feruloyl-galactose and feruloyl-arabinose ester bonds in pectin.</text>
</comment>
<comment type="catalytic activity">
    <reaction evidence="3">
        <text>feruloyl-polysaccharide + H2O = ferulate + polysaccharide.</text>
        <dbReference type="EC" id="3.1.1.73"/>
    </reaction>
</comment>
<comment type="subcellular location">
    <subcellularLocation>
        <location evidence="1">Secreted</location>
    </subcellularLocation>
</comment>
<comment type="similarity">
    <text evidence="5">Belongs to the tannase family.</text>
</comment>
<organism>
    <name type="scientific">Aspergillus flavus (strain ATCC 200026 / FGSC A1120 / IAM 13836 / NRRL 3357 / JCM 12722 / SRRC 167)</name>
    <dbReference type="NCBI Taxonomy" id="332952"/>
    <lineage>
        <taxon>Eukaryota</taxon>
        <taxon>Fungi</taxon>
        <taxon>Dikarya</taxon>
        <taxon>Ascomycota</taxon>
        <taxon>Pezizomycotina</taxon>
        <taxon>Eurotiomycetes</taxon>
        <taxon>Eurotiomycetidae</taxon>
        <taxon>Eurotiales</taxon>
        <taxon>Aspergillaceae</taxon>
        <taxon>Aspergillus</taxon>
        <taxon>Aspergillus subgen. Circumdati</taxon>
    </lineage>
</organism>
<name>FAEB1_ASPFN</name>
<gene>
    <name type="primary">faeB-1</name>
    <name type="ORF">AFLA_128870</name>
</gene>
<dbReference type="EC" id="3.1.1.73" evidence="3"/>
<dbReference type="EMBL" id="EQ963481">
    <property type="protein sequence ID" value="EED48664.1"/>
    <property type="molecule type" value="Genomic_DNA"/>
</dbReference>
<dbReference type="RefSeq" id="XP_002382080.1">
    <property type="nucleotide sequence ID" value="XM_002382039.1"/>
</dbReference>
<dbReference type="SMR" id="B8NPA4"/>
<dbReference type="STRING" id="332952.B8NPA4"/>
<dbReference type="ESTHER" id="aspor-q2umx6">
    <property type="family name" value="Tannase"/>
</dbReference>
<dbReference type="GlyCosmos" id="B8NPA4">
    <property type="glycosylation" value="9 sites, No reported glycans"/>
</dbReference>
<dbReference type="EnsemblFungi" id="EED48664">
    <property type="protein sequence ID" value="EED48664"/>
    <property type="gene ID" value="AFLA_128870"/>
</dbReference>
<dbReference type="VEuPathDB" id="FungiDB:AFLA_012712"/>
<dbReference type="eggNOG" id="ENOG502QPXZ">
    <property type="taxonomic scope" value="Eukaryota"/>
</dbReference>
<dbReference type="HOGENOM" id="CLU_014819_1_0_1"/>
<dbReference type="OMA" id="AWFPREY"/>
<dbReference type="GO" id="GO:0005576">
    <property type="term" value="C:extracellular region"/>
    <property type="evidence" value="ECO:0007669"/>
    <property type="project" value="UniProtKB-SubCell"/>
</dbReference>
<dbReference type="GO" id="GO:0030600">
    <property type="term" value="F:feruloyl esterase activity"/>
    <property type="evidence" value="ECO:0007669"/>
    <property type="project" value="UniProtKB-EC"/>
</dbReference>
<dbReference type="GO" id="GO:0046872">
    <property type="term" value="F:metal ion binding"/>
    <property type="evidence" value="ECO:0007669"/>
    <property type="project" value="UniProtKB-KW"/>
</dbReference>
<dbReference type="GO" id="GO:0045493">
    <property type="term" value="P:xylan catabolic process"/>
    <property type="evidence" value="ECO:0007669"/>
    <property type="project" value="UniProtKB-KW"/>
</dbReference>
<dbReference type="Gene3D" id="3.40.50.1820">
    <property type="entry name" value="alpha/beta hydrolase"/>
    <property type="match status" value="1"/>
</dbReference>
<dbReference type="InterPro" id="IPR029058">
    <property type="entry name" value="AB_hydrolase_fold"/>
</dbReference>
<dbReference type="InterPro" id="IPR011118">
    <property type="entry name" value="Tannase/feruloyl_esterase"/>
</dbReference>
<dbReference type="PANTHER" id="PTHR33938">
    <property type="entry name" value="FERULOYL ESTERASE B-RELATED"/>
    <property type="match status" value="1"/>
</dbReference>
<dbReference type="PANTHER" id="PTHR33938:SF15">
    <property type="entry name" value="FERULOYL ESTERASE B-RELATED"/>
    <property type="match status" value="1"/>
</dbReference>
<dbReference type="Pfam" id="PF07519">
    <property type="entry name" value="Tannase"/>
    <property type="match status" value="1"/>
</dbReference>
<dbReference type="SUPFAM" id="SSF53474">
    <property type="entry name" value="alpha/beta-Hydrolases"/>
    <property type="match status" value="1"/>
</dbReference>
<keyword id="KW-0106">Calcium</keyword>
<keyword id="KW-0119">Carbohydrate metabolism</keyword>
<keyword id="KW-1015">Disulfide bond</keyword>
<keyword id="KW-0325">Glycoprotein</keyword>
<keyword id="KW-0378">Hydrolase</keyword>
<keyword id="KW-0479">Metal-binding</keyword>
<keyword id="KW-0624">Polysaccharide degradation</keyword>
<keyword id="KW-0964">Secreted</keyword>
<keyword id="KW-0719">Serine esterase</keyword>
<keyword id="KW-0732">Signal</keyword>
<keyword id="KW-0858">Xylan degradation</keyword>